<gene>
    <name evidence="1" type="primary">cyoE2</name>
    <name type="ordered locus">PputGB1_0853</name>
</gene>
<proteinExistence type="inferred from homology"/>
<evidence type="ECO:0000255" key="1">
    <source>
        <dbReference type="HAMAP-Rule" id="MF_00154"/>
    </source>
</evidence>
<sequence length="295" mass="31750">MSVKHFIQITKPGIIFGNVLSVAGGFFLASKGHVDFALFLAVVIGTSLVVASGCVFNNCIDRDIDHKMERTKNRVMVQGGMSLPLALIYATLLGVAGFSLLYVQANPLSAFCALIGFIVYVGFYSLWLKRKSVHGTLVGSLSGAMPPVIGYCAVSNSFDLAAVTLLVMFSLWQMPHSFAIAIFRFKDYSAANIPVLPVARGVLAAKKQIVLYVLAFVLATLMLTLGGYAGLGYLAVAAAMGLYWLYMAWGGYKAEDDSKWARKVFGFSILTVTALSVMMGVDSQTAADVLMTYAR</sequence>
<reference key="1">
    <citation type="submission" date="2008-01" db="EMBL/GenBank/DDBJ databases">
        <title>Complete sequence of Pseudomonas putida GB-1.</title>
        <authorList>
            <consortium name="US DOE Joint Genome Institute"/>
            <person name="Copeland A."/>
            <person name="Lucas S."/>
            <person name="Lapidus A."/>
            <person name="Barry K."/>
            <person name="Glavina del Rio T."/>
            <person name="Dalin E."/>
            <person name="Tice H."/>
            <person name="Pitluck S."/>
            <person name="Bruce D."/>
            <person name="Goodwin L."/>
            <person name="Chertkov O."/>
            <person name="Brettin T."/>
            <person name="Detter J.C."/>
            <person name="Han C."/>
            <person name="Kuske C.R."/>
            <person name="Schmutz J."/>
            <person name="Larimer F."/>
            <person name="Land M."/>
            <person name="Hauser L."/>
            <person name="Kyrpides N."/>
            <person name="Kim E."/>
            <person name="McCarthy J.K."/>
            <person name="Richardson P."/>
        </authorList>
    </citation>
    <scope>NUCLEOTIDE SEQUENCE [LARGE SCALE GENOMIC DNA]</scope>
    <source>
        <strain>GB-1</strain>
    </source>
</reference>
<keyword id="KW-0997">Cell inner membrane</keyword>
<keyword id="KW-1003">Cell membrane</keyword>
<keyword id="KW-0350">Heme biosynthesis</keyword>
<keyword id="KW-0472">Membrane</keyword>
<keyword id="KW-0808">Transferase</keyword>
<keyword id="KW-0812">Transmembrane</keyword>
<keyword id="KW-1133">Transmembrane helix</keyword>
<organism>
    <name type="scientific">Pseudomonas putida (strain GB-1)</name>
    <dbReference type="NCBI Taxonomy" id="76869"/>
    <lineage>
        <taxon>Bacteria</taxon>
        <taxon>Pseudomonadati</taxon>
        <taxon>Pseudomonadota</taxon>
        <taxon>Gammaproteobacteria</taxon>
        <taxon>Pseudomonadales</taxon>
        <taxon>Pseudomonadaceae</taxon>
        <taxon>Pseudomonas</taxon>
    </lineage>
</organism>
<protein>
    <recommendedName>
        <fullName evidence="1">Protoheme IX farnesyltransferase 2</fullName>
        <ecNumber evidence="1">2.5.1.141</ecNumber>
    </recommendedName>
    <alternativeName>
        <fullName evidence="1">Heme B farnesyltransferase 2</fullName>
    </alternativeName>
    <alternativeName>
        <fullName evidence="1">Heme O synthase 2</fullName>
    </alternativeName>
</protein>
<comment type="function">
    <text evidence="1">Converts heme B (protoheme IX) to heme O by substitution of the vinyl group on carbon 2 of heme B porphyrin ring with a hydroxyethyl farnesyl side group.</text>
</comment>
<comment type="catalytic activity">
    <reaction evidence="1">
        <text>heme b + (2E,6E)-farnesyl diphosphate + H2O = Fe(II)-heme o + diphosphate</text>
        <dbReference type="Rhea" id="RHEA:28070"/>
        <dbReference type="ChEBI" id="CHEBI:15377"/>
        <dbReference type="ChEBI" id="CHEBI:33019"/>
        <dbReference type="ChEBI" id="CHEBI:60344"/>
        <dbReference type="ChEBI" id="CHEBI:60530"/>
        <dbReference type="ChEBI" id="CHEBI:175763"/>
        <dbReference type="EC" id="2.5.1.141"/>
    </reaction>
</comment>
<comment type="pathway">
    <text evidence="1">Porphyrin-containing compound metabolism; heme O biosynthesis; heme O from protoheme: step 1/1.</text>
</comment>
<comment type="subcellular location">
    <subcellularLocation>
        <location evidence="1">Cell inner membrane</location>
        <topology evidence="1">Multi-pass membrane protein</topology>
    </subcellularLocation>
</comment>
<comment type="miscellaneous">
    <text evidence="1">Carbon 2 of the heme B porphyrin ring is defined according to the Fischer nomenclature.</text>
</comment>
<comment type="similarity">
    <text evidence="1">Belongs to the UbiA prenyltransferase family. Protoheme IX farnesyltransferase subfamily.</text>
</comment>
<name>CYOE2_PSEPG</name>
<accession>B0KPE4</accession>
<dbReference type="EC" id="2.5.1.141" evidence="1"/>
<dbReference type="EMBL" id="CP000926">
    <property type="protein sequence ID" value="ABY96763.1"/>
    <property type="molecule type" value="Genomic_DNA"/>
</dbReference>
<dbReference type="SMR" id="B0KPE4"/>
<dbReference type="KEGG" id="ppg:PputGB1_0853"/>
<dbReference type="eggNOG" id="COG0109">
    <property type="taxonomic scope" value="Bacteria"/>
</dbReference>
<dbReference type="HOGENOM" id="CLU_029631_0_0_6"/>
<dbReference type="UniPathway" id="UPA00834">
    <property type="reaction ID" value="UER00712"/>
</dbReference>
<dbReference type="Proteomes" id="UP000002157">
    <property type="component" value="Chromosome"/>
</dbReference>
<dbReference type="GO" id="GO:0005886">
    <property type="term" value="C:plasma membrane"/>
    <property type="evidence" value="ECO:0007669"/>
    <property type="project" value="UniProtKB-SubCell"/>
</dbReference>
<dbReference type="GO" id="GO:0008495">
    <property type="term" value="F:protoheme IX farnesyltransferase activity"/>
    <property type="evidence" value="ECO:0007669"/>
    <property type="project" value="UniProtKB-UniRule"/>
</dbReference>
<dbReference type="GO" id="GO:0048034">
    <property type="term" value="P:heme O biosynthetic process"/>
    <property type="evidence" value="ECO:0007669"/>
    <property type="project" value="UniProtKB-UniRule"/>
</dbReference>
<dbReference type="CDD" id="cd13957">
    <property type="entry name" value="PT_UbiA_Cox10"/>
    <property type="match status" value="1"/>
</dbReference>
<dbReference type="FunFam" id="1.10.357.140:FF:000001">
    <property type="entry name" value="Protoheme IX farnesyltransferase"/>
    <property type="match status" value="1"/>
</dbReference>
<dbReference type="Gene3D" id="1.10.357.140">
    <property type="entry name" value="UbiA prenyltransferase"/>
    <property type="match status" value="1"/>
</dbReference>
<dbReference type="HAMAP" id="MF_00154">
    <property type="entry name" value="CyoE_CtaB"/>
    <property type="match status" value="1"/>
</dbReference>
<dbReference type="InterPro" id="IPR006369">
    <property type="entry name" value="Protohaem_IX_farnesylTrfase"/>
</dbReference>
<dbReference type="InterPro" id="IPR000537">
    <property type="entry name" value="UbiA_prenyltransferase"/>
</dbReference>
<dbReference type="InterPro" id="IPR030470">
    <property type="entry name" value="UbiA_prenylTrfase_CS"/>
</dbReference>
<dbReference type="InterPro" id="IPR044878">
    <property type="entry name" value="UbiA_sf"/>
</dbReference>
<dbReference type="NCBIfam" id="TIGR01473">
    <property type="entry name" value="cyoE_ctaB"/>
    <property type="match status" value="1"/>
</dbReference>
<dbReference type="NCBIfam" id="NF003348">
    <property type="entry name" value="PRK04375.1-1"/>
    <property type="match status" value="1"/>
</dbReference>
<dbReference type="PANTHER" id="PTHR43448">
    <property type="entry name" value="PROTOHEME IX FARNESYLTRANSFERASE, MITOCHONDRIAL"/>
    <property type="match status" value="1"/>
</dbReference>
<dbReference type="PANTHER" id="PTHR43448:SF2">
    <property type="entry name" value="PROTOHEME IX FARNESYLTRANSFERASE, MITOCHONDRIAL"/>
    <property type="match status" value="1"/>
</dbReference>
<dbReference type="Pfam" id="PF01040">
    <property type="entry name" value="UbiA"/>
    <property type="match status" value="1"/>
</dbReference>
<dbReference type="PROSITE" id="PS00943">
    <property type="entry name" value="UBIA"/>
    <property type="match status" value="1"/>
</dbReference>
<feature type="chain" id="PRO_0000346006" description="Protoheme IX farnesyltransferase 2">
    <location>
        <begin position="1"/>
        <end position="295"/>
    </location>
</feature>
<feature type="transmembrane region" description="Helical" evidence="1">
    <location>
        <begin position="9"/>
        <end position="29"/>
    </location>
</feature>
<feature type="transmembrane region" description="Helical" evidence="1">
    <location>
        <begin position="36"/>
        <end position="56"/>
    </location>
</feature>
<feature type="transmembrane region" description="Helical" evidence="1">
    <location>
        <begin position="83"/>
        <end position="103"/>
    </location>
</feature>
<feature type="transmembrane region" description="Helical" evidence="1">
    <location>
        <begin position="108"/>
        <end position="128"/>
    </location>
</feature>
<feature type="transmembrane region" description="Helical" evidence="1">
    <location>
        <begin position="135"/>
        <end position="155"/>
    </location>
</feature>
<feature type="transmembrane region" description="Helical" evidence="1">
    <location>
        <begin position="163"/>
        <end position="183"/>
    </location>
</feature>
<feature type="transmembrane region" description="Helical" evidence="1">
    <location>
        <begin position="209"/>
        <end position="229"/>
    </location>
</feature>
<feature type="transmembrane region" description="Helical" evidence="1">
    <location>
        <begin position="230"/>
        <end position="250"/>
    </location>
</feature>
<feature type="transmembrane region" description="Helical" evidence="1">
    <location>
        <begin position="264"/>
        <end position="284"/>
    </location>
</feature>